<organism>
    <name type="scientific">Trichophyton verrucosum</name>
    <name type="common">Cattle ringworm fungus</name>
    <dbReference type="NCBI Taxonomy" id="63417"/>
    <lineage>
        <taxon>Eukaryota</taxon>
        <taxon>Fungi</taxon>
        <taxon>Dikarya</taxon>
        <taxon>Ascomycota</taxon>
        <taxon>Pezizomycotina</taxon>
        <taxon>Eurotiomycetes</taxon>
        <taxon>Eurotiomycetidae</taxon>
        <taxon>Onygenales</taxon>
        <taxon>Arthrodermataceae</taxon>
        <taxon>Trichophyton</taxon>
    </lineage>
</organism>
<protein>
    <recommendedName>
        <fullName>Subtilisin-like protease 5</fullName>
        <ecNumber>3.4.21.-</ecNumber>
    </recommendedName>
</protein>
<accession>Q5VJ73</accession>
<comment type="function">
    <text evidence="1">Secreted subtilisin-like serine protease with keratinolytic activity that contributes to pathogenicity.</text>
</comment>
<comment type="subcellular location">
    <subcellularLocation>
        <location evidence="1">Secreted</location>
    </subcellularLocation>
</comment>
<comment type="similarity">
    <text evidence="5">Belongs to the peptidase S8 family.</text>
</comment>
<reference key="1">
    <citation type="submission" date="2003-10" db="EMBL/GenBank/DDBJ databases">
        <title>Subtilisin-like proteases gene family in Dermatophytes.</title>
        <authorList>
            <person name="Jousson O."/>
            <person name="Monod M."/>
        </authorList>
    </citation>
    <scope>NUCLEOTIDE SEQUENCE [GENOMIC DNA]</scope>
</reference>
<dbReference type="EC" id="3.4.21.-"/>
<dbReference type="EMBL" id="AY439109">
    <property type="protein sequence ID" value="AAS45677.1"/>
    <property type="molecule type" value="Genomic_DNA"/>
</dbReference>
<dbReference type="SMR" id="Q5VJ73"/>
<dbReference type="GlyCosmos" id="Q5VJ73">
    <property type="glycosylation" value="4 sites, No reported glycans"/>
</dbReference>
<dbReference type="GO" id="GO:0005576">
    <property type="term" value="C:extracellular region"/>
    <property type="evidence" value="ECO:0007669"/>
    <property type="project" value="UniProtKB-SubCell"/>
</dbReference>
<dbReference type="GO" id="GO:0004252">
    <property type="term" value="F:serine-type endopeptidase activity"/>
    <property type="evidence" value="ECO:0007669"/>
    <property type="project" value="InterPro"/>
</dbReference>
<dbReference type="GO" id="GO:0006508">
    <property type="term" value="P:proteolysis"/>
    <property type="evidence" value="ECO:0007669"/>
    <property type="project" value="UniProtKB-KW"/>
</dbReference>
<dbReference type="CDD" id="cd04077">
    <property type="entry name" value="Peptidases_S8_PCSK9_ProteinaseK_like"/>
    <property type="match status" value="1"/>
</dbReference>
<dbReference type="FunFam" id="3.40.50.200:FF:000014">
    <property type="entry name" value="Proteinase K"/>
    <property type="match status" value="1"/>
</dbReference>
<dbReference type="Gene3D" id="3.30.70.80">
    <property type="entry name" value="Peptidase S8 propeptide/proteinase inhibitor I9"/>
    <property type="match status" value="1"/>
</dbReference>
<dbReference type="Gene3D" id="3.40.50.200">
    <property type="entry name" value="Peptidase S8/S53 domain"/>
    <property type="match status" value="1"/>
</dbReference>
<dbReference type="InterPro" id="IPR034193">
    <property type="entry name" value="PCSK9_ProteinaseK-like"/>
</dbReference>
<dbReference type="InterPro" id="IPR000209">
    <property type="entry name" value="Peptidase_S8/S53_dom"/>
</dbReference>
<dbReference type="InterPro" id="IPR036852">
    <property type="entry name" value="Peptidase_S8/S53_dom_sf"/>
</dbReference>
<dbReference type="InterPro" id="IPR023827">
    <property type="entry name" value="Peptidase_S8_Asp-AS"/>
</dbReference>
<dbReference type="InterPro" id="IPR022398">
    <property type="entry name" value="Peptidase_S8_His-AS"/>
</dbReference>
<dbReference type="InterPro" id="IPR023828">
    <property type="entry name" value="Peptidase_S8_Ser-AS"/>
</dbReference>
<dbReference type="InterPro" id="IPR050131">
    <property type="entry name" value="Peptidase_S8_subtilisin-like"/>
</dbReference>
<dbReference type="InterPro" id="IPR015500">
    <property type="entry name" value="Peptidase_S8_subtilisin-rel"/>
</dbReference>
<dbReference type="InterPro" id="IPR010259">
    <property type="entry name" value="S8pro/Inhibitor_I9"/>
</dbReference>
<dbReference type="InterPro" id="IPR037045">
    <property type="entry name" value="S8pro/Inhibitor_I9_sf"/>
</dbReference>
<dbReference type="PANTHER" id="PTHR43806:SF58">
    <property type="entry name" value="ALKALINE PROTEASE 1-RELATED"/>
    <property type="match status" value="1"/>
</dbReference>
<dbReference type="PANTHER" id="PTHR43806">
    <property type="entry name" value="PEPTIDASE S8"/>
    <property type="match status" value="1"/>
</dbReference>
<dbReference type="Pfam" id="PF05922">
    <property type="entry name" value="Inhibitor_I9"/>
    <property type="match status" value="1"/>
</dbReference>
<dbReference type="Pfam" id="PF00082">
    <property type="entry name" value="Peptidase_S8"/>
    <property type="match status" value="1"/>
</dbReference>
<dbReference type="PRINTS" id="PR00723">
    <property type="entry name" value="SUBTILISIN"/>
</dbReference>
<dbReference type="SUPFAM" id="SSF54897">
    <property type="entry name" value="Protease propeptides/inhibitors"/>
    <property type="match status" value="1"/>
</dbReference>
<dbReference type="SUPFAM" id="SSF52743">
    <property type="entry name" value="Subtilisin-like"/>
    <property type="match status" value="1"/>
</dbReference>
<dbReference type="PROSITE" id="PS51892">
    <property type="entry name" value="SUBTILASE"/>
    <property type="match status" value="1"/>
</dbReference>
<dbReference type="PROSITE" id="PS00136">
    <property type="entry name" value="SUBTILASE_ASP"/>
    <property type="match status" value="1"/>
</dbReference>
<dbReference type="PROSITE" id="PS00137">
    <property type="entry name" value="SUBTILASE_HIS"/>
    <property type="match status" value="1"/>
</dbReference>
<dbReference type="PROSITE" id="PS00138">
    <property type="entry name" value="SUBTILASE_SER"/>
    <property type="match status" value="1"/>
</dbReference>
<keyword id="KW-0325">Glycoprotein</keyword>
<keyword id="KW-0378">Hydrolase</keyword>
<keyword id="KW-0645">Protease</keyword>
<keyword id="KW-0964">Secreted</keyword>
<keyword id="KW-0720">Serine protease</keyword>
<keyword id="KW-0732">Signal</keyword>
<keyword id="KW-0843">Virulence</keyword>
<keyword id="KW-0865">Zymogen</keyword>
<sequence length="396" mass="41763">MTGFFTILSFSLAALSVTNAAQILSVPKGAEVVPNGYIVVMKDDTSQQDFSSHRVWISSIHHNMTRRGLDGAGVKQTYDFDHLRGYSGIFDEDTIKDISNDPKVAFVEPDAIISQHVVVQQRKAPWGLSRLSNRRGGRNYVFDSSAGSGVWAYVVDSGVDVRHAEFQGRAVWGSNLVDNKNSDGTGHGTHVAGTIAGKTYGIAKKAKVVAVKVLNSEGKGPTSGIIAGINWSIRHARKHGMLQKSVLNMSLGGTYSAGLNHATAQAIKAGMFVSVSAGNDNINSNGNSPASERSVCTIAASTENDGKASFSNWGPAVDLYAPGHNILSARPGGGSQTMSGTSMAAPHAAGVAAYLIAKEGIPGNRACLRLKQLSQPTIRNPGPDTTSRLLYNGSGR</sequence>
<proteinExistence type="inferred from homology"/>
<gene>
    <name type="primary">SUB5</name>
</gene>
<name>SUB5_TRIVC</name>
<feature type="signal peptide" evidence="2">
    <location>
        <begin position="1"/>
        <end position="20"/>
    </location>
</feature>
<feature type="propeptide" id="PRO_0000380804" evidence="1">
    <location>
        <begin position="21"/>
        <end position="116"/>
    </location>
</feature>
<feature type="chain" id="PRO_0000380805" description="Subtilisin-like protease 5">
    <location>
        <begin position="117"/>
        <end position="396"/>
    </location>
</feature>
<feature type="domain" description="Inhibitor I9" evidence="2">
    <location>
        <begin position="37"/>
        <end position="113"/>
    </location>
</feature>
<feature type="domain" description="Peptidase S8" evidence="3">
    <location>
        <begin position="125"/>
        <end position="396"/>
    </location>
</feature>
<feature type="region of interest" description="Disordered" evidence="4">
    <location>
        <begin position="376"/>
        <end position="396"/>
    </location>
</feature>
<feature type="compositionally biased region" description="Polar residues" evidence="4">
    <location>
        <begin position="376"/>
        <end position="389"/>
    </location>
</feature>
<feature type="active site" description="Charge relay system" evidence="3">
    <location>
        <position position="156"/>
    </location>
</feature>
<feature type="active site" description="Charge relay system" evidence="3">
    <location>
        <position position="187"/>
    </location>
</feature>
<feature type="active site" description="Charge relay system" evidence="3">
    <location>
        <position position="342"/>
    </location>
</feature>
<feature type="glycosylation site" description="N-linked (GlcNAc...) asparagine" evidence="2">
    <location>
        <position position="63"/>
    </location>
</feature>
<feature type="glycosylation site" description="N-linked (GlcNAc...) asparagine" evidence="2">
    <location>
        <position position="230"/>
    </location>
</feature>
<feature type="glycosylation site" description="N-linked (GlcNAc...) asparagine" evidence="2">
    <location>
        <position position="248"/>
    </location>
</feature>
<feature type="glycosylation site" description="N-linked (GlcNAc...) asparagine" evidence="2">
    <location>
        <position position="392"/>
    </location>
</feature>
<evidence type="ECO:0000250" key="1"/>
<evidence type="ECO:0000255" key="2"/>
<evidence type="ECO:0000255" key="3">
    <source>
        <dbReference type="PROSITE-ProRule" id="PRU01240"/>
    </source>
</evidence>
<evidence type="ECO:0000256" key="4">
    <source>
        <dbReference type="SAM" id="MobiDB-lite"/>
    </source>
</evidence>
<evidence type="ECO:0000305" key="5"/>